<protein>
    <recommendedName>
        <fullName>Probable protein phosphatase 2C 33</fullName>
        <shortName>AtPP2C33</shortName>
        <ecNumber>3.1.3.16</ecNumber>
    </recommendedName>
    <alternativeName>
        <fullName>AtPPC6;1</fullName>
    </alternativeName>
</protein>
<name>P2C33_ARATH</name>
<organism>
    <name type="scientific">Arabidopsis thaliana</name>
    <name type="common">Mouse-ear cress</name>
    <dbReference type="NCBI Taxonomy" id="3702"/>
    <lineage>
        <taxon>Eukaryota</taxon>
        <taxon>Viridiplantae</taxon>
        <taxon>Streptophyta</taxon>
        <taxon>Embryophyta</taxon>
        <taxon>Tracheophyta</taxon>
        <taxon>Spermatophyta</taxon>
        <taxon>Magnoliopsida</taxon>
        <taxon>eudicotyledons</taxon>
        <taxon>Gunneridae</taxon>
        <taxon>Pentapetalae</taxon>
        <taxon>rosids</taxon>
        <taxon>malvids</taxon>
        <taxon>Brassicales</taxon>
        <taxon>Brassicaceae</taxon>
        <taxon>Camelineae</taxon>
        <taxon>Arabidopsis</taxon>
    </lineage>
</organism>
<keyword id="KW-0025">Alternative splicing</keyword>
<keyword id="KW-0378">Hydrolase</keyword>
<keyword id="KW-0460">Magnesium</keyword>
<keyword id="KW-0464">Manganese</keyword>
<keyword id="KW-0479">Metal-binding</keyword>
<keyword id="KW-0904">Protein phosphatase</keyword>
<keyword id="KW-1185">Reference proteome</keyword>
<sequence length="492" mass="53715">MGSCLSAESRSPRPGSPCSPAFSVRKRKNSKKRPGSRNSSFDYRREEPLNQVPGRMFLNGSTEVACIYTQQGKKGPNQDAMVVWENFGSRTDTIFCGVFDGHGPYGHMVAKRVRDNLPLKLSAYWEAKVPVEGVLKAITTDTVNNVTNINNPEDAAAAAAFVTAEEEPRTSADMEEENTETQPELFQTLKESFLKAFKVMDRELKFHGSVDCFCSGTTAVTLIKQGQYLVVGNVGDSRAVMGTRDSENTLVAVQLTVDLKPNLPAEAERIRKCRGRVFALRDEPEVCRVWLPNCDSPGLAMARAFGDFCLKDFGLISVPDVSFRQLTEKDEFIVLATDGIWDVLSNEDVVAIVASAPSRSSAARALVESAVRAWRYKYPTSKVDDCAAVCLYLDSSNTNAISTASSISKLEDGEEEELKATTEDDDASGPSGLGRSSTVRSGKEIALDESETEKLIKEADNLDSEPGTEYSALEGVARVNTLLNLPRFVPGK</sequence>
<dbReference type="EC" id="3.1.3.16"/>
<dbReference type="EMBL" id="AC018363">
    <property type="protein sequence ID" value="AAF26985.1"/>
    <property type="molecule type" value="Genomic_DNA"/>
</dbReference>
<dbReference type="EMBL" id="CP002686">
    <property type="protein sequence ID" value="AEE73854.1"/>
    <property type="molecule type" value="Genomic_DNA"/>
</dbReference>
<dbReference type="EMBL" id="CP002686">
    <property type="protein sequence ID" value="AEE73855.1"/>
    <property type="molecule type" value="Genomic_DNA"/>
</dbReference>
<dbReference type="EMBL" id="CP002686">
    <property type="protein sequence ID" value="AEE73856.1"/>
    <property type="molecule type" value="Genomic_DNA"/>
</dbReference>
<dbReference type="EMBL" id="AY062496">
    <property type="protein sequence ID" value="AAL32574.1"/>
    <property type="molecule type" value="mRNA"/>
</dbReference>
<dbReference type="EMBL" id="BX824075">
    <property type="status" value="NOT_ANNOTATED_CDS"/>
    <property type="molecule type" value="mRNA"/>
</dbReference>
<dbReference type="EMBL" id="BT020578">
    <property type="protein sequence ID" value="AAW80851.1"/>
    <property type="molecule type" value="mRNA"/>
</dbReference>
<dbReference type="EMBL" id="BT029026">
    <property type="protein sequence ID" value="ABI93935.1"/>
    <property type="molecule type" value="mRNA"/>
</dbReference>
<dbReference type="EMBL" id="AB079669">
    <property type="protein sequence ID" value="BAB84698.1"/>
    <property type="molecule type" value="mRNA"/>
</dbReference>
<dbReference type="RefSeq" id="NP_001030624.1">
    <molecule id="Q9M8R7-1"/>
    <property type="nucleotide sequence ID" value="NM_001035547.2"/>
</dbReference>
<dbReference type="RefSeq" id="NP_001030625.1">
    <molecule id="Q9M8R7-2"/>
    <property type="nucleotide sequence ID" value="NM_001035548.1"/>
</dbReference>
<dbReference type="RefSeq" id="NP_186924.1">
    <molecule id="Q9M8R7-1"/>
    <property type="nucleotide sequence ID" value="NM_111143.3"/>
</dbReference>
<dbReference type="SMR" id="Q9M8R7"/>
<dbReference type="BioGRID" id="6243">
    <property type="interactions" value="2"/>
</dbReference>
<dbReference type="FunCoup" id="Q9M8R7">
    <property type="interactions" value="812"/>
</dbReference>
<dbReference type="IntAct" id="Q9M8R7">
    <property type="interactions" value="1"/>
</dbReference>
<dbReference type="MINT" id="Q9M8R7"/>
<dbReference type="STRING" id="3702.Q9M8R7"/>
<dbReference type="iPTMnet" id="Q9M8R7"/>
<dbReference type="SwissPalm" id="Q9M8R7"/>
<dbReference type="PaxDb" id="3702-AT3G02750.3"/>
<dbReference type="ProteomicsDB" id="248879">
    <molecule id="Q9M8R7-1"/>
</dbReference>
<dbReference type="EnsemblPlants" id="AT3G02750.1">
    <molecule id="Q9M8R7-1"/>
    <property type="protein sequence ID" value="AT3G02750.1"/>
    <property type="gene ID" value="AT3G02750"/>
</dbReference>
<dbReference type="EnsemblPlants" id="AT3G02750.2">
    <molecule id="Q9M8R7-1"/>
    <property type="protein sequence ID" value="AT3G02750.2"/>
    <property type="gene ID" value="AT3G02750"/>
</dbReference>
<dbReference type="EnsemblPlants" id="AT3G02750.3">
    <molecule id="Q9M8R7-2"/>
    <property type="protein sequence ID" value="AT3G02750.3"/>
    <property type="gene ID" value="AT3G02750"/>
</dbReference>
<dbReference type="GeneID" id="820909"/>
<dbReference type="Gramene" id="AT3G02750.1">
    <molecule id="Q9M8R7-1"/>
    <property type="protein sequence ID" value="AT3G02750.1"/>
    <property type="gene ID" value="AT3G02750"/>
</dbReference>
<dbReference type="Gramene" id="AT3G02750.2">
    <molecule id="Q9M8R7-1"/>
    <property type="protein sequence ID" value="AT3G02750.2"/>
    <property type="gene ID" value="AT3G02750"/>
</dbReference>
<dbReference type="Gramene" id="AT3G02750.3">
    <molecule id="Q9M8R7-2"/>
    <property type="protein sequence ID" value="AT3G02750.3"/>
    <property type="gene ID" value="AT3G02750"/>
</dbReference>
<dbReference type="KEGG" id="ath:AT3G02750"/>
<dbReference type="Araport" id="AT3G02750"/>
<dbReference type="TAIR" id="AT3G02750"/>
<dbReference type="eggNOG" id="KOG0698">
    <property type="taxonomic scope" value="Eukaryota"/>
</dbReference>
<dbReference type="HOGENOM" id="CLU_013173_6_0_1"/>
<dbReference type="InParanoid" id="Q9M8R7"/>
<dbReference type="OMA" id="MHANIDC"/>
<dbReference type="OrthoDB" id="10264738at2759"/>
<dbReference type="PhylomeDB" id="Q9M8R7"/>
<dbReference type="PRO" id="PR:Q9M8R7"/>
<dbReference type="Proteomes" id="UP000006548">
    <property type="component" value="Chromosome 3"/>
</dbReference>
<dbReference type="ExpressionAtlas" id="Q9M8R7">
    <property type="expression patterns" value="baseline and differential"/>
</dbReference>
<dbReference type="GO" id="GO:0046872">
    <property type="term" value="F:metal ion binding"/>
    <property type="evidence" value="ECO:0007669"/>
    <property type="project" value="UniProtKB-KW"/>
</dbReference>
<dbReference type="GO" id="GO:0004722">
    <property type="term" value="F:protein serine/threonine phosphatase activity"/>
    <property type="evidence" value="ECO:0007669"/>
    <property type="project" value="UniProtKB-EC"/>
</dbReference>
<dbReference type="CDD" id="cd00143">
    <property type="entry name" value="PP2Cc"/>
    <property type="match status" value="1"/>
</dbReference>
<dbReference type="FunFam" id="3.60.40.10:FF:000024">
    <property type="entry name" value="probable protein phosphatase 2C 33"/>
    <property type="match status" value="1"/>
</dbReference>
<dbReference type="Gene3D" id="3.60.40.10">
    <property type="entry name" value="PPM-type phosphatase domain"/>
    <property type="match status" value="1"/>
</dbReference>
<dbReference type="InterPro" id="IPR015655">
    <property type="entry name" value="PP2C"/>
</dbReference>
<dbReference type="InterPro" id="IPR036457">
    <property type="entry name" value="PPM-type-like_dom_sf"/>
</dbReference>
<dbReference type="InterPro" id="IPR001932">
    <property type="entry name" value="PPM-type_phosphatase-like_dom"/>
</dbReference>
<dbReference type="PANTHER" id="PTHR47992">
    <property type="entry name" value="PROTEIN PHOSPHATASE"/>
    <property type="match status" value="1"/>
</dbReference>
<dbReference type="Pfam" id="PF00481">
    <property type="entry name" value="PP2C"/>
    <property type="match status" value="1"/>
</dbReference>
<dbReference type="SMART" id="SM00332">
    <property type="entry name" value="PP2Cc"/>
    <property type="match status" value="1"/>
</dbReference>
<dbReference type="SUPFAM" id="SSF81606">
    <property type="entry name" value="PP2C-like"/>
    <property type="match status" value="1"/>
</dbReference>
<dbReference type="PROSITE" id="PS51746">
    <property type="entry name" value="PPM_2"/>
    <property type="match status" value="1"/>
</dbReference>
<evidence type="ECO:0000250" key="1"/>
<evidence type="ECO:0000255" key="2">
    <source>
        <dbReference type="PROSITE-ProRule" id="PRU01082"/>
    </source>
</evidence>
<evidence type="ECO:0000256" key="3">
    <source>
        <dbReference type="SAM" id="MobiDB-lite"/>
    </source>
</evidence>
<evidence type="ECO:0000305" key="4"/>
<accession>Q9M8R7</accession>
<accession>Q2V3Z1</accession>
<accession>Q8SBC3</accession>
<accession>Q8W4L2</accession>
<reference key="1">
    <citation type="journal article" date="2000" name="Nature">
        <title>Sequence and analysis of chromosome 3 of the plant Arabidopsis thaliana.</title>
        <authorList>
            <person name="Salanoubat M."/>
            <person name="Lemcke K."/>
            <person name="Rieger M."/>
            <person name="Ansorge W."/>
            <person name="Unseld M."/>
            <person name="Fartmann B."/>
            <person name="Valle G."/>
            <person name="Bloecker H."/>
            <person name="Perez-Alonso M."/>
            <person name="Obermaier B."/>
            <person name="Delseny M."/>
            <person name="Boutry M."/>
            <person name="Grivell L.A."/>
            <person name="Mache R."/>
            <person name="Puigdomenech P."/>
            <person name="De Simone V."/>
            <person name="Choisne N."/>
            <person name="Artiguenave F."/>
            <person name="Robert C."/>
            <person name="Brottier P."/>
            <person name="Wincker P."/>
            <person name="Cattolico L."/>
            <person name="Weissenbach J."/>
            <person name="Saurin W."/>
            <person name="Quetier F."/>
            <person name="Schaefer M."/>
            <person name="Mueller-Auer S."/>
            <person name="Gabel C."/>
            <person name="Fuchs M."/>
            <person name="Benes V."/>
            <person name="Wurmbach E."/>
            <person name="Drzonek H."/>
            <person name="Erfle H."/>
            <person name="Jordan N."/>
            <person name="Bangert S."/>
            <person name="Wiedelmann R."/>
            <person name="Kranz H."/>
            <person name="Voss H."/>
            <person name="Holland R."/>
            <person name="Brandt P."/>
            <person name="Nyakatura G."/>
            <person name="Vezzi A."/>
            <person name="D'Angelo M."/>
            <person name="Pallavicini A."/>
            <person name="Toppo S."/>
            <person name="Simionati B."/>
            <person name="Conrad A."/>
            <person name="Hornischer K."/>
            <person name="Kauer G."/>
            <person name="Loehnert T.-H."/>
            <person name="Nordsiek G."/>
            <person name="Reichelt J."/>
            <person name="Scharfe M."/>
            <person name="Schoen O."/>
            <person name="Bargues M."/>
            <person name="Terol J."/>
            <person name="Climent J."/>
            <person name="Navarro P."/>
            <person name="Collado C."/>
            <person name="Perez-Perez A."/>
            <person name="Ottenwaelder B."/>
            <person name="Duchemin D."/>
            <person name="Cooke R."/>
            <person name="Laudie M."/>
            <person name="Berger-Llauro C."/>
            <person name="Purnelle B."/>
            <person name="Masuy D."/>
            <person name="de Haan M."/>
            <person name="Maarse A.C."/>
            <person name="Alcaraz J.-P."/>
            <person name="Cottet A."/>
            <person name="Casacuberta E."/>
            <person name="Monfort A."/>
            <person name="Argiriou A."/>
            <person name="Flores M."/>
            <person name="Liguori R."/>
            <person name="Vitale D."/>
            <person name="Mannhaupt G."/>
            <person name="Haase D."/>
            <person name="Schoof H."/>
            <person name="Rudd S."/>
            <person name="Zaccaria P."/>
            <person name="Mewes H.-W."/>
            <person name="Mayer K.F.X."/>
            <person name="Kaul S."/>
            <person name="Town C.D."/>
            <person name="Koo H.L."/>
            <person name="Tallon L.J."/>
            <person name="Jenkins J."/>
            <person name="Rooney T."/>
            <person name="Rizzo M."/>
            <person name="Walts A."/>
            <person name="Utterback T."/>
            <person name="Fujii C.Y."/>
            <person name="Shea T.P."/>
            <person name="Creasy T.H."/>
            <person name="Haas B."/>
            <person name="Maiti R."/>
            <person name="Wu D."/>
            <person name="Peterson J."/>
            <person name="Van Aken S."/>
            <person name="Pai G."/>
            <person name="Militscher J."/>
            <person name="Sellers P."/>
            <person name="Gill J.E."/>
            <person name="Feldblyum T.V."/>
            <person name="Preuss D."/>
            <person name="Lin X."/>
            <person name="Nierman W.C."/>
            <person name="Salzberg S.L."/>
            <person name="White O."/>
            <person name="Venter J.C."/>
            <person name="Fraser C.M."/>
            <person name="Kaneko T."/>
            <person name="Nakamura Y."/>
            <person name="Sato S."/>
            <person name="Kato T."/>
            <person name="Asamizu E."/>
            <person name="Sasamoto S."/>
            <person name="Kimura T."/>
            <person name="Idesawa K."/>
            <person name="Kawashima K."/>
            <person name="Kishida Y."/>
            <person name="Kiyokawa C."/>
            <person name="Kohara M."/>
            <person name="Matsumoto M."/>
            <person name="Matsuno A."/>
            <person name="Muraki A."/>
            <person name="Nakayama S."/>
            <person name="Nakazaki N."/>
            <person name="Shinpo S."/>
            <person name="Takeuchi C."/>
            <person name="Wada T."/>
            <person name="Watanabe A."/>
            <person name="Yamada M."/>
            <person name="Yasuda M."/>
            <person name="Tabata S."/>
        </authorList>
    </citation>
    <scope>NUCLEOTIDE SEQUENCE [LARGE SCALE GENOMIC DNA]</scope>
    <source>
        <strain>cv. Columbia</strain>
    </source>
</reference>
<reference key="2">
    <citation type="journal article" date="2017" name="Plant J.">
        <title>Araport11: a complete reannotation of the Arabidopsis thaliana reference genome.</title>
        <authorList>
            <person name="Cheng C.Y."/>
            <person name="Krishnakumar V."/>
            <person name="Chan A.P."/>
            <person name="Thibaud-Nissen F."/>
            <person name="Schobel S."/>
            <person name="Town C.D."/>
        </authorList>
    </citation>
    <scope>GENOME REANNOTATION</scope>
    <source>
        <strain>cv. Columbia</strain>
    </source>
</reference>
<reference key="3">
    <citation type="journal article" date="2003" name="Science">
        <title>Empirical analysis of transcriptional activity in the Arabidopsis genome.</title>
        <authorList>
            <person name="Yamada K."/>
            <person name="Lim J."/>
            <person name="Dale J.M."/>
            <person name="Chen H."/>
            <person name="Shinn P."/>
            <person name="Palm C.J."/>
            <person name="Southwick A.M."/>
            <person name="Wu H.C."/>
            <person name="Kim C.J."/>
            <person name="Nguyen M."/>
            <person name="Pham P.K."/>
            <person name="Cheuk R.F."/>
            <person name="Karlin-Newmann G."/>
            <person name="Liu S.X."/>
            <person name="Lam B."/>
            <person name="Sakano H."/>
            <person name="Wu T."/>
            <person name="Yu G."/>
            <person name="Miranda M."/>
            <person name="Quach H.L."/>
            <person name="Tripp M."/>
            <person name="Chang C.H."/>
            <person name="Lee J.M."/>
            <person name="Toriumi M.J."/>
            <person name="Chan M.M."/>
            <person name="Tang C.C."/>
            <person name="Onodera C.S."/>
            <person name="Deng J.M."/>
            <person name="Akiyama K."/>
            <person name="Ansari Y."/>
            <person name="Arakawa T."/>
            <person name="Banh J."/>
            <person name="Banno F."/>
            <person name="Bowser L."/>
            <person name="Brooks S.Y."/>
            <person name="Carninci P."/>
            <person name="Chao Q."/>
            <person name="Choy N."/>
            <person name="Enju A."/>
            <person name="Goldsmith A.D."/>
            <person name="Gurjal M."/>
            <person name="Hansen N.F."/>
            <person name="Hayashizaki Y."/>
            <person name="Johnson-Hopson C."/>
            <person name="Hsuan V.W."/>
            <person name="Iida K."/>
            <person name="Karnes M."/>
            <person name="Khan S."/>
            <person name="Koesema E."/>
            <person name="Ishida J."/>
            <person name="Jiang P.X."/>
            <person name="Jones T."/>
            <person name="Kawai J."/>
            <person name="Kamiya A."/>
            <person name="Meyers C."/>
            <person name="Nakajima M."/>
            <person name="Narusaka M."/>
            <person name="Seki M."/>
            <person name="Sakurai T."/>
            <person name="Satou M."/>
            <person name="Tamse R."/>
            <person name="Vaysberg M."/>
            <person name="Wallender E.K."/>
            <person name="Wong C."/>
            <person name="Yamamura Y."/>
            <person name="Yuan S."/>
            <person name="Shinozaki K."/>
            <person name="Davis R.W."/>
            <person name="Theologis A."/>
            <person name="Ecker J.R."/>
        </authorList>
    </citation>
    <scope>NUCLEOTIDE SEQUENCE [LARGE SCALE MRNA]</scope>
    <source>
        <strain>cv. Columbia</strain>
    </source>
</reference>
<reference key="4">
    <citation type="journal article" date="2004" name="Genome Res.">
        <title>Whole genome sequence comparisons and 'full-length' cDNA sequences: a combined approach to evaluate and improve Arabidopsis genome annotation.</title>
        <authorList>
            <person name="Castelli V."/>
            <person name="Aury J.-M."/>
            <person name="Jaillon O."/>
            <person name="Wincker P."/>
            <person name="Clepet C."/>
            <person name="Menard M."/>
            <person name="Cruaud C."/>
            <person name="Quetier F."/>
            <person name="Scarpelli C."/>
            <person name="Schaechter V."/>
            <person name="Temple G."/>
            <person name="Caboche M."/>
            <person name="Weissenbach J."/>
            <person name="Salanoubat M."/>
        </authorList>
    </citation>
    <scope>NUCLEOTIDE SEQUENCE [LARGE SCALE MRNA]</scope>
    <source>
        <strain>cv. Columbia</strain>
    </source>
</reference>
<reference key="5">
    <citation type="submission" date="2006-09" db="EMBL/GenBank/DDBJ databases">
        <title>Arabidopsis ORF clones.</title>
        <authorList>
            <person name="Bautista V.R."/>
            <person name="Kim C.J."/>
            <person name="Chen H."/>
            <person name="Quinitio C."/>
            <person name="Ecker J.R."/>
        </authorList>
    </citation>
    <scope>NUCLEOTIDE SEQUENCE [LARGE SCALE MRNA]</scope>
    <source>
        <strain>cv. Columbia</strain>
    </source>
</reference>
<reference key="6">
    <citation type="submission" date="2002-02" db="EMBL/GenBank/DDBJ databases">
        <title>Substrate specificity of type 2C protein phosphatases (PP2C) in Arabidopsis thaliana.</title>
        <authorList>
            <person name="Izumi S."/>
            <person name="Yamada M."/>
            <person name="Ohsato H."/>
            <person name="Miyazaki S."/>
            <person name="Bohnert H.J."/>
            <person name="Fukuhara T."/>
        </authorList>
    </citation>
    <scope>NUCLEOTIDE SEQUENCE [MRNA] OF 191-492</scope>
</reference>
<reference key="7">
    <citation type="journal article" date="2008" name="BMC Genomics">
        <title>Genome-wide and expression analysis of protein phosphatase 2C in rice and Arabidopsis.</title>
        <authorList>
            <person name="Xue T."/>
            <person name="Wang D."/>
            <person name="Zhang S."/>
            <person name="Ehlting J."/>
            <person name="Ni F."/>
            <person name="Jacab S."/>
            <person name="Zheng C."/>
            <person name="Zhong Y."/>
        </authorList>
    </citation>
    <scope>GENE FAMILY</scope>
    <scope>NOMENCLATURE</scope>
</reference>
<reference key="8">
    <citation type="journal article" date="2009" name="Plant Physiol.">
        <title>Large-scale Arabidopsis phosphoproteome profiling reveals novel chloroplast kinase substrates and phosphorylation networks.</title>
        <authorList>
            <person name="Reiland S."/>
            <person name="Messerli G."/>
            <person name="Baerenfaller K."/>
            <person name="Gerrits B."/>
            <person name="Endler A."/>
            <person name="Grossmann J."/>
            <person name="Gruissem W."/>
            <person name="Baginsky S."/>
        </authorList>
    </citation>
    <scope>IDENTIFICATION BY MASS SPECTROMETRY [LARGE SCALE ANALYSIS]</scope>
</reference>
<gene>
    <name type="primary">PPC6-1</name>
    <name type="ordered locus">At3g02750</name>
    <name type="ORF">F13E7.31</name>
</gene>
<proteinExistence type="evidence at protein level"/>
<comment type="catalytic activity">
    <reaction>
        <text>O-phospho-L-seryl-[protein] + H2O = L-seryl-[protein] + phosphate</text>
        <dbReference type="Rhea" id="RHEA:20629"/>
        <dbReference type="Rhea" id="RHEA-COMP:9863"/>
        <dbReference type="Rhea" id="RHEA-COMP:11604"/>
        <dbReference type="ChEBI" id="CHEBI:15377"/>
        <dbReference type="ChEBI" id="CHEBI:29999"/>
        <dbReference type="ChEBI" id="CHEBI:43474"/>
        <dbReference type="ChEBI" id="CHEBI:83421"/>
        <dbReference type="EC" id="3.1.3.16"/>
    </reaction>
</comment>
<comment type="catalytic activity">
    <reaction>
        <text>O-phospho-L-threonyl-[protein] + H2O = L-threonyl-[protein] + phosphate</text>
        <dbReference type="Rhea" id="RHEA:47004"/>
        <dbReference type="Rhea" id="RHEA-COMP:11060"/>
        <dbReference type="Rhea" id="RHEA-COMP:11605"/>
        <dbReference type="ChEBI" id="CHEBI:15377"/>
        <dbReference type="ChEBI" id="CHEBI:30013"/>
        <dbReference type="ChEBI" id="CHEBI:43474"/>
        <dbReference type="ChEBI" id="CHEBI:61977"/>
        <dbReference type="EC" id="3.1.3.16"/>
    </reaction>
</comment>
<comment type="cofactor">
    <cofactor evidence="1">
        <name>Mg(2+)</name>
        <dbReference type="ChEBI" id="CHEBI:18420"/>
    </cofactor>
    <cofactor evidence="1">
        <name>Mn(2+)</name>
        <dbReference type="ChEBI" id="CHEBI:29035"/>
    </cofactor>
    <text evidence="1">Binds 2 magnesium or manganese ions per subunit.</text>
</comment>
<comment type="alternative products">
    <event type="alternative splicing"/>
    <isoform>
        <id>Q9M8R7-1</id>
        <name>1</name>
        <sequence type="displayed"/>
    </isoform>
    <isoform>
        <id>Q9M8R7-2</id>
        <name>2</name>
        <sequence type="described" ref="VSP_036766"/>
    </isoform>
</comment>
<comment type="miscellaneous">
    <molecule>Isoform 2</molecule>
    <text evidence="4">May be due to an intron retention.</text>
</comment>
<comment type="similarity">
    <text evidence="4">Belongs to the PP2C family.</text>
</comment>
<comment type="sequence caution" evidence="4">
    <conflict type="miscellaneous discrepancy">
        <sequence resource="EMBL" id="BX824075"/>
    </conflict>
    <text>Sequencing errors.</text>
</comment>
<feature type="chain" id="PRO_0000367960" description="Probable protein phosphatase 2C 33">
    <location>
        <begin position="1"/>
        <end position="492"/>
    </location>
</feature>
<feature type="domain" description="PPM-type phosphatase" evidence="2">
    <location>
        <begin position="64"/>
        <end position="393"/>
    </location>
</feature>
<feature type="region of interest" description="Disordered" evidence="3">
    <location>
        <begin position="1"/>
        <end position="46"/>
    </location>
</feature>
<feature type="region of interest" description="Disordered" evidence="3">
    <location>
        <begin position="406"/>
        <end position="468"/>
    </location>
</feature>
<feature type="compositionally biased region" description="Basic residues" evidence="3">
    <location>
        <begin position="24"/>
        <end position="35"/>
    </location>
</feature>
<feature type="compositionally biased region" description="Acidic residues" evidence="3">
    <location>
        <begin position="412"/>
        <end position="427"/>
    </location>
</feature>
<feature type="compositionally biased region" description="Basic and acidic residues" evidence="3">
    <location>
        <begin position="441"/>
        <end position="460"/>
    </location>
</feature>
<feature type="binding site" evidence="1">
    <location>
        <position position="100"/>
    </location>
    <ligand>
        <name>Mn(2+)</name>
        <dbReference type="ChEBI" id="CHEBI:29035"/>
        <label>1</label>
    </ligand>
</feature>
<feature type="binding site" evidence="1">
    <location>
        <position position="100"/>
    </location>
    <ligand>
        <name>Mn(2+)</name>
        <dbReference type="ChEBI" id="CHEBI:29035"/>
        <label>2</label>
    </ligand>
</feature>
<feature type="binding site" evidence="1">
    <location>
        <position position="101"/>
    </location>
    <ligand>
        <name>Mn(2+)</name>
        <dbReference type="ChEBI" id="CHEBI:29035"/>
        <label>1</label>
    </ligand>
</feature>
<feature type="binding site" evidence="1">
    <location>
        <position position="338"/>
    </location>
    <ligand>
        <name>Mn(2+)</name>
        <dbReference type="ChEBI" id="CHEBI:29035"/>
        <label>2</label>
    </ligand>
</feature>
<feature type="binding site" evidence="1">
    <location>
        <position position="384"/>
    </location>
    <ligand>
        <name>Mn(2+)</name>
        <dbReference type="ChEBI" id="CHEBI:29035"/>
        <label>2</label>
    </ligand>
</feature>
<feature type="splice variant" id="VSP_036766" description="In isoform 2." evidence="4">
    <original>P</original>
    <variation>PGWIILCECMMLSCGCMMDPLIMFIGFFFIPSIELA</variation>
    <location>
        <position position="264"/>
    </location>
</feature>
<feature type="sequence conflict" description="In Ref. 3; AAL32574." evidence="4" ref="3">
    <original>F</original>
    <variation>L</variation>
    <location>
        <position position="41"/>
    </location>
</feature>